<name>T2R38_GORGO</name>
<accession>Q697L4</accession>
<accession>Q645Y6</accession>
<evidence type="ECO:0000250" key="1"/>
<evidence type="ECO:0000255" key="2"/>
<evidence type="ECO:0000305" key="3"/>
<dbReference type="EMBL" id="AY566403">
    <property type="protein sequence ID" value="AAS67623.1"/>
    <property type="molecule type" value="Genomic_DNA"/>
</dbReference>
<dbReference type="EMBL" id="AY724927">
    <property type="protein sequence ID" value="AAU21133.1"/>
    <property type="molecule type" value="Genomic_DNA"/>
</dbReference>
<dbReference type="RefSeq" id="XP_004046392.3">
    <property type="nucleotide sequence ID" value="XM_004046344.3"/>
</dbReference>
<dbReference type="SMR" id="Q697L4"/>
<dbReference type="FunCoup" id="Q697L4">
    <property type="interactions" value="234"/>
</dbReference>
<dbReference type="STRING" id="9593.ENSGGOP00000000265"/>
<dbReference type="GlyCosmos" id="Q697L4">
    <property type="glycosylation" value="1 site, No reported glycans"/>
</dbReference>
<dbReference type="GeneID" id="101153624"/>
<dbReference type="eggNOG" id="ENOG502T15G">
    <property type="taxonomic scope" value="Eukaryota"/>
</dbReference>
<dbReference type="HOGENOM" id="CLU_072337_3_0_1"/>
<dbReference type="InParanoid" id="Q697L4"/>
<dbReference type="Proteomes" id="UP000001519">
    <property type="component" value="Unplaced"/>
</dbReference>
<dbReference type="GO" id="GO:0016020">
    <property type="term" value="C:membrane"/>
    <property type="evidence" value="ECO:0000318"/>
    <property type="project" value="GO_Central"/>
</dbReference>
<dbReference type="GO" id="GO:0005886">
    <property type="term" value="C:plasma membrane"/>
    <property type="evidence" value="ECO:0007669"/>
    <property type="project" value="UniProtKB-ARBA"/>
</dbReference>
<dbReference type="GO" id="GO:0033038">
    <property type="term" value="F:bitter taste receptor activity"/>
    <property type="evidence" value="ECO:0000318"/>
    <property type="project" value="GO_Central"/>
</dbReference>
<dbReference type="GO" id="GO:0004930">
    <property type="term" value="F:G protein-coupled receptor activity"/>
    <property type="evidence" value="ECO:0007669"/>
    <property type="project" value="UniProtKB-KW"/>
</dbReference>
<dbReference type="GO" id="GO:0001580">
    <property type="term" value="P:detection of chemical stimulus involved in sensory perception of bitter taste"/>
    <property type="evidence" value="ECO:0000318"/>
    <property type="project" value="GO_Central"/>
</dbReference>
<dbReference type="CDD" id="cd15025">
    <property type="entry name" value="7tm_TAS2R38"/>
    <property type="match status" value="1"/>
</dbReference>
<dbReference type="FunFam" id="1.20.1070.10:FF:000055">
    <property type="entry name" value="Taste receptor type 2"/>
    <property type="match status" value="1"/>
</dbReference>
<dbReference type="InterPro" id="IPR007960">
    <property type="entry name" value="TAS2R"/>
</dbReference>
<dbReference type="InterPro" id="IPR030050">
    <property type="entry name" value="TAS2R38"/>
</dbReference>
<dbReference type="PANTHER" id="PTHR11394">
    <property type="entry name" value="TASTE RECEPTOR TYPE 2"/>
    <property type="match status" value="1"/>
</dbReference>
<dbReference type="PANTHER" id="PTHR11394:SF52">
    <property type="entry name" value="TASTE RECEPTOR TYPE 2 MEMBER 38"/>
    <property type="match status" value="1"/>
</dbReference>
<dbReference type="Pfam" id="PF05296">
    <property type="entry name" value="TAS2R"/>
    <property type="match status" value="1"/>
</dbReference>
<dbReference type="SUPFAM" id="SSF81321">
    <property type="entry name" value="Family A G protein-coupled receptor-like"/>
    <property type="match status" value="1"/>
</dbReference>
<feature type="chain" id="PRO_0000082272" description="Taste receptor type 2 member 38">
    <location>
        <begin position="1"/>
        <end position="333"/>
    </location>
</feature>
<feature type="topological domain" description="Extracellular" evidence="2">
    <location>
        <begin position="1"/>
        <end position="17"/>
    </location>
</feature>
<feature type="transmembrane region" description="Helical; Name=1" evidence="2">
    <location>
        <begin position="18"/>
        <end position="38"/>
    </location>
</feature>
<feature type="topological domain" description="Cytoplasmic" evidence="2">
    <location>
        <begin position="39"/>
        <end position="55"/>
    </location>
</feature>
<feature type="transmembrane region" description="Helical; Name=2" evidence="2">
    <location>
        <begin position="56"/>
        <end position="76"/>
    </location>
</feature>
<feature type="topological domain" description="Extracellular" evidence="2">
    <location>
        <begin position="77"/>
        <end position="94"/>
    </location>
</feature>
<feature type="transmembrane region" description="Helical; Name=3" evidence="2">
    <location>
        <begin position="95"/>
        <end position="115"/>
    </location>
</feature>
<feature type="topological domain" description="Cytoplasmic" evidence="2">
    <location>
        <begin position="116"/>
        <end position="142"/>
    </location>
</feature>
<feature type="transmembrane region" description="Helical; Name=4" evidence="2">
    <location>
        <begin position="143"/>
        <end position="163"/>
    </location>
</feature>
<feature type="topological domain" description="Extracellular" evidence="2">
    <location>
        <begin position="164"/>
        <end position="190"/>
    </location>
</feature>
<feature type="transmembrane region" description="Helical; Name=5" evidence="2">
    <location>
        <begin position="191"/>
        <end position="211"/>
    </location>
</feature>
<feature type="topological domain" description="Cytoplasmic" evidence="2">
    <location>
        <begin position="212"/>
        <end position="251"/>
    </location>
</feature>
<feature type="transmembrane region" description="Helical; Name=6" evidence="2">
    <location>
        <begin position="252"/>
        <end position="272"/>
    </location>
</feature>
<feature type="topological domain" description="Extracellular" evidence="2">
    <location>
        <begin position="273"/>
        <end position="276"/>
    </location>
</feature>
<feature type="transmembrane region" description="Helical; Name=7" evidence="2">
    <location>
        <begin position="277"/>
        <end position="297"/>
    </location>
</feature>
<feature type="topological domain" description="Cytoplasmic" evidence="2">
    <location>
        <begin position="298"/>
        <end position="333"/>
    </location>
</feature>
<feature type="glycosylation site" description="N-linked (GlcNAc...) asparagine" evidence="2">
    <location>
        <position position="178"/>
    </location>
</feature>
<feature type="sequence conflict" description="In Ref. 2; AAU21133." evidence="3" ref="2">
    <original>I</original>
    <variation>T</variation>
    <location>
        <position position="147"/>
    </location>
</feature>
<comment type="function">
    <text evidence="1">Receptor that may play a role in the perception of bitterness and is gustducin-linked. May play a role in sensing the chemical composition of the gastrointestinal content. The activity of this receptor may stimulate alpha gustducin, mediate PLC-beta-2 activation and lead to the gating of TRPM5 (By similarity).</text>
</comment>
<comment type="subcellular location">
    <subcellularLocation>
        <location>Membrane</location>
        <topology>Multi-pass membrane protein</topology>
    </subcellularLocation>
</comment>
<comment type="miscellaneous">
    <text>Most taste cells may be activated by a limited number of bitter compounds; individual taste cells can discriminate among bitter stimuli.</text>
</comment>
<comment type="similarity">
    <text evidence="3">Belongs to the G-protein coupled receptor T2R family.</text>
</comment>
<keyword id="KW-0297">G-protein coupled receptor</keyword>
<keyword id="KW-0325">Glycoprotein</keyword>
<keyword id="KW-0472">Membrane</keyword>
<keyword id="KW-0675">Receptor</keyword>
<keyword id="KW-1185">Reference proteome</keyword>
<keyword id="KW-0716">Sensory transduction</keyword>
<keyword id="KW-0919">Taste</keyword>
<keyword id="KW-0807">Transducer</keyword>
<keyword id="KW-0812">Transmembrane</keyword>
<keyword id="KW-1133">Transmembrane helix</keyword>
<proteinExistence type="inferred from homology"/>
<protein>
    <recommendedName>
        <fullName>Taste receptor type 2 member 38</fullName>
        <shortName>T2R38</shortName>
    </recommendedName>
</protein>
<reference key="1">
    <citation type="submission" date="2004-03" db="EMBL/GenBank/DDBJ databases">
        <title>A global survey of haplotype frequencies for the TAS2R38 (PTC) gene.</title>
        <authorList>
            <person name="Davidson A.C."/>
            <person name="Pakstis A.J."/>
            <person name="Speed W.C."/>
            <person name="Odunsi A."/>
            <person name="Okonafua F."/>
            <person name="Kajuna S.L.J."/>
            <person name="Kungulilo S.V."/>
            <person name="Friedlaender J."/>
            <person name="Lu R.-B."/>
            <person name="Grigorenko E.L."/>
            <person name="Zhukova O.V."/>
            <person name="Schultz L.O."/>
            <person name="Bonne-Tamir B."/>
            <person name="Duffy V."/>
            <person name="Bartoshuk L."/>
            <person name="Kidd K.K."/>
            <person name="Kidd J.R."/>
        </authorList>
    </citation>
    <scope>NUCLEOTIDE SEQUENCE [GENOMIC DNA]</scope>
</reference>
<reference key="2">
    <citation type="journal article" date="2005" name="Mol. Biol. Evol.">
        <title>Evolution of bitter taste receptors in humans and apes.</title>
        <authorList>
            <person name="Fischer A."/>
            <person name="Gilad Y."/>
            <person name="Man O."/>
            <person name="Paeaebo S."/>
        </authorList>
    </citation>
    <scope>NUCLEOTIDE SEQUENCE [GENOMIC DNA]</scope>
</reference>
<organism>
    <name type="scientific">Gorilla gorilla gorilla</name>
    <name type="common">Western lowland gorilla</name>
    <dbReference type="NCBI Taxonomy" id="9595"/>
    <lineage>
        <taxon>Eukaryota</taxon>
        <taxon>Metazoa</taxon>
        <taxon>Chordata</taxon>
        <taxon>Craniata</taxon>
        <taxon>Vertebrata</taxon>
        <taxon>Euteleostomi</taxon>
        <taxon>Mammalia</taxon>
        <taxon>Eutheria</taxon>
        <taxon>Euarchontoglires</taxon>
        <taxon>Primates</taxon>
        <taxon>Haplorrhini</taxon>
        <taxon>Catarrhini</taxon>
        <taxon>Hominidae</taxon>
        <taxon>Gorilla</taxon>
    </lineage>
</organism>
<gene>
    <name type="primary">TAS2R38</name>
</gene>
<sequence>MLTLTRIRTVSYEVRSTFLFISVLEFAVGFLTNAFVFLVNFWDVVKRQPLSNSDCVLLCLSISRLFLHGLLFLSAIQLTHFQKLSEPLNHSYQAIIMLWMIANQANLWLAACLSLLYCSKLIRFSHTFLICLASWVSRKISQMLLGIILCSCICTVLCVWCFFSRPHFTVTTVLFMNNNTRLNWQIKDLNLFYSFLFCYLWSVPPFLLFLVSSGMLTVSLGRHMRTMKVYIRDSRDPSLEAHIKALKSLVSFFCFFVISSCAAFISVPLLILWRDKIGVMVCVGIMAACPSGHAAVLISGNAKLRRAVTTILLWAQSSLKVRADHKADSRTPC</sequence>